<proteinExistence type="inferred from homology"/>
<dbReference type="EC" id="7.1.1.9"/>
<dbReference type="EMBL" id="U36847">
    <property type="protein sequence ID" value="AAA79954.1"/>
    <property type="molecule type" value="Genomic_DNA"/>
</dbReference>
<dbReference type="SMR" id="P50661"/>
<dbReference type="GO" id="GO:0005743">
    <property type="term" value="C:mitochondrial inner membrane"/>
    <property type="evidence" value="ECO:0007669"/>
    <property type="project" value="UniProtKB-SubCell"/>
</dbReference>
<dbReference type="GO" id="GO:0045277">
    <property type="term" value="C:respiratory chain complex IV"/>
    <property type="evidence" value="ECO:0000250"/>
    <property type="project" value="UniProtKB"/>
</dbReference>
<dbReference type="GO" id="GO:0005507">
    <property type="term" value="F:copper ion binding"/>
    <property type="evidence" value="ECO:0007669"/>
    <property type="project" value="InterPro"/>
</dbReference>
<dbReference type="GO" id="GO:0004129">
    <property type="term" value="F:cytochrome-c oxidase activity"/>
    <property type="evidence" value="ECO:0007669"/>
    <property type="project" value="UniProtKB-EC"/>
</dbReference>
<dbReference type="GO" id="GO:0042773">
    <property type="term" value="P:ATP synthesis coupled electron transport"/>
    <property type="evidence" value="ECO:0007669"/>
    <property type="project" value="TreeGrafter"/>
</dbReference>
<dbReference type="CDD" id="cd13912">
    <property type="entry name" value="CcO_II_C"/>
    <property type="match status" value="1"/>
</dbReference>
<dbReference type="FunFam" id="1.10.287.90:FF:000001">
    <property type="entry name" value="Cytochrome c oxidase subunit 2"/>
    <property type="match status" value="1"/>
</dbReference>
<dbReference type="FunFam" id="2.60.40.420:FF:000001">
    <property type="entry name" value="Cytochrome c oxidase subunit 2"/>
    <property type="match status" value="1"/>
</dbReference>
<dbReference type="Gene3D" id="1.10.287.90">
    <property type="match status" value="1"/>
</dbReference>
<dbReference type="Gene3D" id="2.60.40.420">
    <property type="entry name" value="Cupredoxins - blue copper proteins"/>
    <property type="match status" value="1"/>
</dbReference>
<dbReference type="InterPro" id="IPR045187">
    <property type="entry name" value="CcO_II"/>
</dbReference>
<dbReference type="InterPro" id="IPR002429">
    <property type="entry name" value="CcO_II-like_C"/>
</dbReference>
<dbReference type="InterPro" id="IPR034210">
    <property type="entry name" value="CcO_II_C"/>
</dbReference>
<dbReference type="InterPro" id="IPR001505">
    <property type="entry name" value="Copper_CuA"/>
</dbReference>
<dbReference type="InterPro" id="IPR008972">
    <property type="entry name" value="Cupredoxin"/>
</dbReference>
<dbReference type="InterPro" id="IPR014222">
    <property type="entry name" value="Cyt_c_oxidase_su2"/>
</dbReference>
<dbReference type="InterPro" id="IPR011759">
    <property type="entry name" value="Cyt_c_oxidase_su2_TM_dom"/>
</dbReference>
<dbReference type="InterPro" id="IPR036257">
    <property type="entry name" value="Cyt_c_oxidase_su2_TM_sf"/>
</dbReference>
<dbReference type="NCBIfam" id="TIGR02866">
    <property type="entry name" value="CoxB"/>
    <property type="match status" value="1"/>
</dbReference>
<dbReference type="PANTHER" id="PTHR22888:SF9">
    <property type="entry name" value="CYTOCHROME C OXIDASE SUBUNIT 2"/>
    <property type="match status" value="1"/>
</dbReference>
<dbReference type="PANTHER" id="PTHR22888">
    <property type="entry name" value="CYTOCHROME C OXIDASE, SUBUNIT II"/>
    <property type="match status" value="1"/>
</dbReference>
<dbReference type="Pfam" id="PF00116">
    <property type="entry name" value="COX2"/>
    <property type="match status" value="1"/>
</dbReference>
<dbReference type="Pfam" id="PF02790">
    <property type="entry name" value="COX2_TM"/>
    <property type="match status" value="1"/>
</dbReference>
<dbReference type="PRINTS" id="PR01166">
    <property type="entry name" value="CYCOXIDASEII"/>
</dbReference>
<dbReference type="SUPFAM" id="SSF49503">
    <property type="entry name" value="Cupredoxins"/>
    <property type="match status" value="1"/>
</dbReference>
<dbReference type="SUPFAM" id="SSF81464">
    <property type="entry name" value="Cytochrome c oxidase subunit II-like, transmembrane region"/>
    <property type="match status" value="1"/>
</dbReference>
<dbReference type="PROSITE" id="PS00078">
    <property type="entry name" value="COX2"/>
    <property type="match status" value="1"/>
</dbReference>
<dbReference type="PROSITE" id="PS50857">
    <property type="entry name" value="COX2_CUA"/>
    <property type="match status" value="1"/>
</dbReference>
<dbReference type="PROSITE" id="PS50999">
    <property type="entry name" value="COX2_TM"/>
    <property type="match status" value="1"/>
</dbReference>
<accession>P50661</accession>
<keyword id="KW-0186">Copper</keyword>
<keyword id="KW-0249">Electron transport</keyword>
<keyword id="KW-0460">Magnesium</keyword>
<keyword id="KW-0472">Membrane</keyword>
<keyword id="KW-0479">Metal-binding</keyword>
<keyword id="KW-0496">Mitochondrion</keyword>
<keyword id="KW-0999">Mitochondrion inner membrane</keyword>
<keyword id="KW-0679">Respiratory chain</keyword>
<keyword id="KW-1278">Translocase</keyword>
<keyword id="KW-0812">Transmembrane</keyword>
<keyword id="KW-1133">Transmembrane helix</keyword>
<keyword id="KW-0813">Transport</keyword>
<gene>
    <name type="primary">MT-CO2</name>
    <name type="synonym">COII</name>
    <name type="synonym">COX2</name>
    <name type="synonym">COXII</name>
    <name type="synonym">MTCO2</name>
</gene>
<evidence type="ECO:0000250" key="1">
    <source>
        <dbReference type="UniProtKB" id="P00403"/>
    </source>
</evidence>
<evidence type="ECO:0000250" key="2">
    <source>
        <dbReference type="UniProtKB" id="P00410"/>
    </source>
</evidence>
<evidence type="ECO:0000250" key="3">
    <source>
        <dbReference type="UniProtKB" id="P68530"/>
    </source>
</evidence>
<evidence type="ECO:0000305" key="4"/>
<comment type="function">
    <text evidence="2">Component of the cytochrome c oxidase, the last enzyme in the mitochondrial electron transport chain which drives oxidative phosphorylation. The respiratory chain contains 3 multisubunit complexes succinate dehydrogenase (complex II, CII), ubiquinol-cytochrome c oxidoreductase (cytochrome b-c1 complex, complex III, CIII) and cytochrome c oxidase (complex IV, CIV), that cooperate to transfer electrons derived from NADH and succinate to molecular oxygen, creating an electrochemical gradient over the inner membrane that drives transmembrane transport and the ATP synthase. Cytochrome c oxidase is the component of the respiratory chain that catalyzes the reduction of oxygen to water. Electrons originating from reduced cytochrome c in the intermembrane space (IMS) are transferred via the dinuclear copper A center (CU(A)) of subunit 2 and heme A of subunit 1 to the active site in subunit 1, a binuclear center (BNC) formed by heme A3 and copper B (CU(B)). The BNC reduces molecular oxygen to 2 water molecules using 4 electrons from cytochrome c in the IMS and 4 protons from the mitochondrial matrix.</text>
</comment>
<comment type="catalytic activity">
    <reaction evidence="2">
        <text>4 Fe(II)-[cytochrome c] + O2 + 8 H(+)(in) = 4 Fe(III)-[cytochrome c] + 2 H2O + 4 H(+)(out)</text>
        <dbReference type="Rhea" id="RHEA:11436"/>
        <dbReference type="Rhea" id="RHEA-COMP:10350"/>
        <dbReference type="Rhea" id="RHEA-COMP:14399"/>
        <dbReference type="ChEBI" id="CHEBI:15377"/>
        <dbReference type="ChEBI" id="CHEBI:15378"/>
        <dbReference type="ChEBI" id="CHEBI:15379"/>
        <dbReference type="ChEBI" id="CHEBI:29033"/>
        <dbReference type="ChEBI" id="CHEBI:29034"/>
        <dbReference type="EC" id="7.1.1.9"/>
    </reaction>
    <physiologicalReaction direction="left-to-right" evidence="2">
        <dbReference type="Rhea" id="RHEA:11437"/>
    </physiologicalReaction>
</comment>
<comment type="cofactor">
    <cofactor evidence="3">
        <name>Cu cation</name>
        <dbReference type="ChEBI" id="CHEBI:23378"/>
    </cofactor>
    <text evidence="3">Binds a dinuclear copper A center per subunit.</text>
</comment>
<comment type="subunit">
    <text evidence="1 3">Component of the cytochrome c oxidase (complex IV, CIV), a multisubunit enzyme composed of 14 subunits. The complex is composed of a catalytic core of 3 subunits MT-CO1, MT-CO2 and MT-CO3, encoded in the mitochondrial DNA, and 11 supernumerary subunits COX4I, COX5A, COX5B, COX6A, COX6B, COX6C, COX7A, COX7B, COX7C, COX8 and NDUFA4, which are encoded in the nuclear genome. The complex exists as a monomer or a dimer and forms supercomplexes (SCs) in the inner mitochondrial membrane with NADH-ubiquinone oxidoreductase (complex I, CI) and ubiquinol-cytochrome c oxidoreductase (cytochrome b-c1 complex, complex III, CIII), resulting in different assemblies (supercomplex SCI(1)III(2)IV(1) and megacomplex MCI(2)III(2)IV(2)) (By similarity). Found in a complex with TMEM177, COA6, COX18, COX20, SCO1 and SCO2. Interacts with TMEM177 in a COX20-dependent manner. Interacts with COX20. Interacts with COX16 (By similarity).</text>
</comment>
<comment type="subcellular location">
    <subcellularLocation>
        <location evidence="3">Mitochondrion inner membrane</location>
        <topology evidence="3">Multi-pass membrane protein</topology>
    </subcellularLocation>
</comment>
<comment type="similarity">
    <text evidence="4">Belongs to the cytochrome c oxidase subunit 2 family.</text>
</comment>
<protein>
    <recommendedName>
        <fullName>Cytochrome c oxidase subunit 2</fullName>
        <ecNumber>7.1.1.9</ecNumber>
    </recommendedName>
    <alternativeName>
        <fullName>Cytochrome c oxidase polypeptide II</fullName>
    </alternativeName>
</protein>
<sequence>LGLQNATSPIMEELIAFHDHALMIIFLISSLVLYIISLMLTTKLTHTSTMNAQEIEMIWTILPAVILIMIALPSLRILYMTDEFNKPYLTLKAIGHQWYWSYEYSDYEDLAFDSYITPTYFLEPGEFRLLEVDNRTTLPMEADIRVLISSQDVLHSWAVPALGVKTDAIPGRLNQAMLTSTRPGLYYGQCSEICGSNHSFMPIVLEFIYFQDFEVW</sequence>
<feature type="chain" id="PRO_0000183529" description="Cytochrome c oxidase subunit 2">
    <location>
        <begin position="1" status="less than"/>
        <end position="216" status="greater than"/>
    </location>
</feature>
<feature type="topological domain" description="Mitochondrial intermembrane" evidence="3">
    <location>
        <begin position="1" status="less than"/>
        <end position="8"/>
    </location>
</feature>
<feature type="transmembrane region" description="Helical; Name=I" evidence="3">
    <location>
        <begin position="9"/>
        <end position="39"/>
    </location>
</feature>
<feature type="topological domain" description="Mitochondrial matrix" evidence="3">
    <location>
        <begin position="40"/>
        <end position="53"/>
    </location>
</feature>
<feature type="transmembrane region" description="Helical; Name=II" evidence="3">
    <location>
        <begin position="54"/>
        <end position="81"/>
    </location>
</feature>
<feature type="topological domain" description="Mitochondrial intermembrane" evidence="3">
    <location>
        <begin position="82"/>
        <end position="216" status="greater than"/>
    </location>
</feature>
<feature type="binding site" evidence="3">
    <location>
        <position position="155"/>
    </location>
    <ligand>
        <name>Cu cation</name>
        <dbReference type="ChEBI" id="CHEBI:23378"/>
        <label>A1</label>
    </ligand>
</feature>
<feature type="binding site" evidence="3">
    <location>
        <position position="190"/>
    </location>
    <ligand>
        <name>Cu cation</name>
        <dbReference type="ChEBI" id="CHEBI:23378"/>
        <label>A1</label>
    </ligand>
</feature>
<feature type="binding site" evidence="3">
    <location>
        <position position="190"/>
    </location>
    <ligand>
        <name>Cu cation</name>
        <dbReference type="ChEBI" id="CHEBI:23378"/>
        <label>A2</label>
    </ligand>
</feature>
<feature type="binding site" evidence="3">
    <location>
        <position position="192"/>
    </location>
    <ligand>
        <name>Cu cation</name>
        <dbReference type="ChEBI" id="CHEBI:23378"/>
        <label>A2</label>
    </ligand>
</feature>
<feature type="binding site" evidence="3">
    <location>
        <position position="192"/>
    </location>
    <ligand>
        <name>Mg(2+)</name>
        <dbReference type="ChEBI" id="CHEBI:18420"/>
        <note>ligand shared with MT-CO1</note>
    </ligand>
</feature>
<feature type="binding site" evidence="3">
    <location>
        <position position="194"/>
    </location>
    <ligand>
        <name>Cu cation</name>
        <dbReference type="ChEBI" id="CHEBI:23378"/>
        <label>A1</label>
    </ligand>
</feature>
<feature type="binding site" evidence="3">
    <location>
        <position position="194"/>
    </location>
    <ligand>
        <name>Cu cation</name>
        <dbReference type="ChEBI" id="CHEBI:23378"/>
        <label>A2</label>
    </ligand>
</feature>
<feature type="binding site" evidence="3">
    <location>
        <position position="198"/>
    </location>
    <ligand>
        <name>Cu cation</name>
        <dbReference type="ChEBI" id="CHEBI:23378"/>
        <label>A2</label>
    </ligand>
</feature>
<feature type="binding site" evidence="3">
    <location>
        <position position="201"/>
    </location>
    <ligand>
        <name>Cu cation</name>
        <dbReference type="ChEBI" id="CHEBI:23378"/>
        <label>A1</label>
    </ligand>
</feature>
<feature type="non-terminal residue">
    <location>
        <position position="1"/>
    </location>
</feature>
<feature type="non-terminal residue">
    <location>
        <position position="216"/>
    </location>
</feature>
<reference key="1">
    <citation type="journal article" date="1995" name="Int. J. Primatol.">
        <title>Owl monkeys (Aotus) are highly divergent in mitochondrial cytochrome c oxidase (COII) sequences.</title>
        <authorList>
            <person name="Ashley M.V."/>
            <person name="Vaughn J.L."/>
        </authorList>
    </citation>
    <scope>NUCLEOTIDE SEQUENCE [GENOMIC DNA]</scope>
</reference>
<name>COX2_CALGO</name>
<organism>
    <name type="scientific">Callimico goeldii</name>
    <name type="common">Goeldi's marmoset</name>
    <dbReference type="NCBI Taxonomy" id="9495"/>
    <lineage>
        <taxon>Eukaryota</taxon>
        <taxon>Metazoa</taxon>
        <taxon>Chordata</taxon>
        <taxon>Craniata</taxon>
        <taxon>Vertebrata</taxon>
        <taxon>Euteleostomi</taxon>
        <taxon>Mammalia</taxon>
        <taxon>Eutheria</taxon>
        <taxon>Euarchontoglires</taxon>
        <taxon>Primates</taxon>
        <taxon>Haplorrhini</taxon>
        <taxon>Platyrrhini</taxon>
        <taxon>Cebidae</taxon>
        <taxon>Callitrichinae</taxon>
        <taxon>Callimico</taxon>
    </lineage>
</organism>
<geneLocation type="mitochondrion"/>